<organism>
    <name type="scientific">Trypanosoma brucei brucei</name>
    <dbReference type="NCBI Taxonomy" id="5702"/>
    <lineage>
        <taxon>Eukaryota</taxon>
        <taxon>Discoba</taxon>
        <taxon>Euglenozoa</taxon>
        <taxon>Kinetoplastea</taxon>
        <taxon>Metakinetoplastina</taxon>
        <taxon>Trypanosomatida</taxon>
        <taxon>Trypanosomatidae</taxon>
        <taxon>Trypanosoma</taxon>
    </lineage>
</organism>
<accession>P17962</accession>
<reference key="1">
    <citation type="journal article" date="1990" name="Nucleic Acids Res.">
        <title>The genes encoding fructose bisphosphate aldolase in Trypanosoma brucei are interspersed with unrelated genes.</title>
        <authorList>
            <person name="Vijayasarathy S."/>
            <person name="Ernest I."/>
            <person name="Itzhaki J."/>
            <person name="Sherman D."/>
            <person name="Mowatt M.R."/>
            <person name="Michels P.A.M."/>
            <person name="Clayton C.E."/>
        </authorList>
    </citation>
    <scope>NUCLEOTIDE SEQUENCE [GENOMIC DNA]</scope>
    <source>
        <strain>427</strain>
    </source>
</reference>
<sequence>MGPSTSPLVGCNGDRKVLQQPVKITLMEKWFPGDVAESTLDPAQAPLYQYTEGVDEANEGCPRAFVTLKAGVEEDALKYSFVGCCSNFDEVVSRMTKESWIELRNTRGQISSRASLRRKKGAVRAMKYILSTNVGEHVPKSSILRHWNEYLLILARNRDSSLPFRFSFGSKVRALPLSSLPSLAAH</sequence>
<name>YALD_TRYBB</name>
<dbReference type="EMBL" id="X52587">
    <property type="protein sequence ID" value="CAA36823.1"/>
    <property type="molecule type" value="Genomic_DNA"/>
</dbReference>
<dbReference type="PIR" id="S12679">
    <property type="entry name" value="S12679"/>
</dbReference>
<proteinExistence type="predicted"/>
<feature type="chain" id="PRO_0000066119" description="Uncharacterized 21 kDa protein in aldolase locus">
    <location>
        <begin position="1"/>
        <end position="186"/>
    </location>
</feature>
<protein>
    <recommendedName>
        <fullName>Uncharacterized 21 kDa protein in aldolase locus</fullName>
    </recommendedName>
    <alternativeName>
        <fullName>ORFD</fullName>
    </alternativeName>
</protein>